<proteinExistence type="inferred from homology"/>
<comment type="function">
    <text evidence="1">One of the proteins required for the normal export of preproteins out of the cell cytoplasm. It is a molecular chaperone that binds to a subset of precursor proteins, maintaining them in a translocation-competent state. It also specifically binds to its receptor SecA.</text>
</comment>
<comment type="subunit">
    <text evidence="1">Homotetramer, a dimer of dimers. One homotetramer interacts with 1 SecA dimer.</text>
</comment>
<comment type="subcellular location">
    <subcellularLocation>
        <location evidence="1">Cytoplasm</location>
    </subcellularLocation>
</comment>
<comment type="similarity">
    <text evidence="1">Belongs to the SecB family.</text>
</comment>
<reference key="1">
    <citation type="journal article" date="2008" name="J. Bacteriol.">
        <title>Complete genome sequence of uropathogenic Proteus mirabilis, a master of both adherence and motility.</title>
        <authorList>
            <person name="Pearson M.M."/>
            <person name="Sebaihia M."/>
            <person name="Churcher C."/>
            <person name="Quail M.A."/>
            <person name="Seshasayee A.S."/>
            <person name="Luscombe N.M."/>
            <person name="Abdellah Z."/>
            <person name="Arrosmith C."/>
            <person name="Atkin B."/>
            <person name="Chillingworth T."/>
            <person name="Hauser H."/>
            <person name="Jagels K."/>
            <person name="Moule S."/>
            <person name="Mungall K."/>
            <person name="Norbertczak H."/>
            <person name="Rabbinowitsch E."/>
            <person name="Walker D."/>
            <person name="Whithead S."/>
            <person name="Thomson N.R."/>
            <person name="Rather P.N."/>
            <person name="Parkhill J."/>
            <person name="Mobley H.L.T."/>
        </authorList>
    </citation>
    <scope>NUCLEOTIDE SEQUENCE [LARGE SCALE GENOMIC DNA]</scope>
    <source>
        <strain>HI4320</strain>
    </source>
</reference>
<organism>
    <name type="scientific">Proteus mirabilis (strain HI4320)</name>
    <dbReference type="NCBI Taxonomy" id="529507"/>
    <lineage>
        <taxon>Bacteria</taxon>
        <taxon>Pseudomonadati</taxon>
        <taxon>Pseudomonadota</taxon>
        <taxon>Gammaproteobacteria</taxon>
        <taxon>Enterobacterales</taxon>
        <taxon>Morganellaceae</taxon>
        <taxon>Proteus</taxon>
    </lineage>
</organism>
<accession>B4F139</accession>
<keyword id="KW-0143">Chaperone</keyword>
<keyword id="KW-0963">Cytoplasm</keyword>
<keyword id="KW-0653">Protein transport</keyword>
<keyword id="KW-1185">Reference proteome</keyword>
<keyword id="KW-0811">Translocation</keyword>
<keyword id="KW-0813">Transport</keyword>
<name>SECB_PROMH</name>
<dbReference type="EMBL" id="AM942759">
    <property type="protein sequence ID" value="CAR46247.1"/>
    <property type="molecule type" value="Genomic_DNA"/>
</dbReference>
<dbReference type="RefSeq" id="WP_004246454.1">
    <property type="nucleotide sequence ID" value="NC_010554.1"/>
</dbReference>
<dbReference type="SMR" id="B4F139"/>
<dbReference type="EnsemblBacteria" id="CAR46247">
    <property type="protein sequence ID" value="CAR46247"/>
    <property type="gene ID" value="PMI3183"/>
</dbReference>
<dbReference type="GeneID" id="6801050"/>
<dbReference type="KEGG" id="pmr:PMI3183"/>
<dbReference type="eggNOG" id="COG1952">
    <property type="taxonomic scope" value="Bacteria"/>
</dbReference>
<dbReference type="HOGENOM" id="CLU_111574_1_0_6"/>
<dbReference type="Proteomes" id="UP000008319">
    <property type="component" value="Chromosome"/>
</dbReference>
<dbReference type="GO" id="GO:0005737">
    <property type="term" value="C:cytoplasm"/>
    <property type="evidence" value="ECO:0007669"/>
    <property type="project" value="UniProtKB-SubCell"/>
</dbReference>
<dbReference type="GO" id="GO:0051082">
    <property type="term" value="F:unfolded protein binding"/>
    <property type="evidence" value="ECO:0007669"/>
    <property type="project" value="InterPro"/>
</dbReference>
<dbReference type="GO" id="GO:0006457">
    <property type="term" value="P:protein folding"/>
    <property type="evidence" value="ECO:0007669"/>
    <property type="project" value="UniProtKB-UniRule"/>
</dbReference>
<dbReference type="GO" id="GO:0051262">
    <property type="term" value="P:protein tetramerization"/>
    <property type="evidence" value="ECO:0007669"/>
    <property type="project" value="InterPro"/>
</dbReference>
<dbReference type="GO" id="GO:0015031">
    <property type="term" value="P:protein transport"/>
    <property type="evidence" value="ECO:0007669"/>
    <property type="project" value="UniProtKB-UniRule"/>
</dbReference>
<dbReference type="CDD" id="cd00557">
    <property type="entry name" value="Translocase_SecB"/>
    <property type="match status" value="1"/>
</dbReference>
<dbReference type="FunFam" id="3.10.420.10:FF:000001">
    <property type="entry name" value="Protein-export chaperone SecB"/>
    <property type="match status" value="1"/>
</dbReference>
<dbReference type="Gene3D" id="3.10.420.10">
    <property type="entry name" value="SecB-like"/>
    <property type="match status" value="1"/>
</dbReference>
<dbReference type="HAMAP" id="MF_00821">
    <property type="entry name" value="SecB"/>
    <property type="match status" value="1"/>
</dbReference>
<dbReference type="InterPro" id="IPR003708">
    <property type="entry name" value="SecB"/>
</dbReference>
<dbReference type="InterPro" id="IPR035958">
    <property type="entry name" value="SecB-like_sf"/>
</dbReference>
<dbReference type="NCBIfam" id="NF004390">
    <property type="entry name" value="PRK05751.1-1"/>
    <property type="match status" value="1"/>
</dbReference>
<dbReference type="NCBIfam" id="NF004393">
    <property type="entry name" value="PRK05751.1-4"/>
    <property type="match status" value="1"/>
</dbReference>
<dbReference type="NCBIfam" id="TIGR00809">
    <property type="entry name" value="secB"/>
    <property type="match status" value="1"/>
</dbReference>
<dbReference type="PANTHER" id="PTHR36918">
    <property type="match status" value="1"/>
</dbReference>
<dbReference type="PANTHER" id="PTHR36918:SF1">
    <property type="entry name" value="PROTEIN-EXPORT PROTEIN SECB"/>
    <property type="match status" value="1"/>
</dbReference>
<dbReference type="Pfam" id="PF02556">
    <property type="entry name" value="SecB"/>
    <property type="match status" value="1"/>
</dbReference>
<dbReference type="PRINTS" id="PR01594">
    <property type="entry name" value="SECBCHAPRONE"/>
</dbReference>
<dbReference type="SUPFAM" id="SSF54611">
    <property type="entry name" value="SecB-like"/>
    <property type="match status" value="1"/>
</dbReference>
<evidence type="ECO:0000255" key="1">
    <source>
        <dbReference type="HAMAP-Rule" id="MF_00821"/>
    </source>
</evidence>
<feature type="chain" id="PRO_1000195331" description="Protein-export protein SecB">
    <location>
        <begin position="1"/>
        <end position="157"/>
    </location>
</feature>
<sequence>MSEQQNQEMTFQIQRIYTKDISFEAPNAPQVFQKEWQPEVKLDLDTSSNTLAENVYEVILRVTVTATMEEETAFLCEVQQAGIFTVEGIEGTQLAHCLGAYCPNVLFPYARECITNLVGRGTFPQLNLAPVNFDALFMNYLQQQQQQDAANSGVEEA</sequence>
<protein>
    <recommendedName>
        <fullName evidence="1">Protein-export protein SecB</fullName>
    </recommendedName>
</protein>
<gene>
    <name evidence="1" type="primary">secB</name>
    <name type="ordered locus">PMI3183</name>
</gene>